<feature type="chain" id="PRO_0000366200" description="Transketolase">
    <location>
        <begin position="1"/>
        <end position="670"/>
    </location>
</feature>
<feature type="active site" description="Proton donor" evidence="1">
    <location>
        <position position="416"/>
    </location>
</feature>
<feature type="binding site" evidence="1">
    <location>
        <position position="31"/>
    </location>
    <ligand>
        <name>substrate</name>
    </ligand>
</feature>
<feature type="binding site" evidence="1">
    <location>
        <position position="71"/>
    </location>
    <ligand>
        <name>thiamine diphosphate</name>
        <dbReference type="ChEBI" id="CHEBI:58937"/>
    </ligand>
</feature>
<feature type="binding site" evidence="1">
    <location>
        <begin position="120"/>
        <end position="122"/>
    </location>
    <ligand>
        <name>thiamine diphosphate</name>
        <dbReference type="ChEBI" id="CHEBI:58937"/>
    </ligand>
</feature>
<feature type="binding site" evidence="1">
    <location>
        <position position="161"/>
    </location>
    <ligand>
        <name>Mg(2+)</name>
        <dbReference type="ChEBI" id="CHEBI:18420"/>
    </ligand>
</feature>
<feature type="binding site" evidence="1">
    <location>
        <position position="162"/>
    </location>
    <ligand>
        <name>thiamine diphosphate</name>
        <dbReference type="ChEBI" id="CHEBI:58937"/>
    </ligand>
</feature>
<feature type="binding site" evidence="1">
    <location>
        <position position="191"/>
    </location>
    <ligand>
        <name>Mg(2+)</name>
        <dbReference type="ChEBI" id="CHEBI:18420"/>
    </ligand>
</feature>
<feature type="binding site" evidence="1">
    <location>
        <position position="191"/>
    </location>
    <ligand>
        <name>thiamine diphosphate</name>
        <dbReference type="ChEBI" id="CHEBI:58937"/>
    </ligand>
</feature>
<feature type="binding site" evidence="1">
    <location>
        <position position="193"/>
    </location>
    <ligand>
        <name>Mg(2+)</name>
        <dbReference type="ChEBI" id="CHEBI:18420"/>
    </ligand>
</feature>
<feature type="binding site" evidence="1">
    <location>
        <position position="268"/>
    </location>
    <ligand>
        <name>substrate</name>
    </ligand>
</feature>
<feature type="binding site" evidence="1">
    <location>
        <position position="268"/>
    </location>
    <ligand>
        <name>thiamine diphosphate</name>
        <dbReference type="ChEBI" id="CHEBI:58937"/>
    </ligand>
</feature>
<feature type="binding site" evidence="1">
    <location>
        <position position="362"/>
    </location>
    <ligand>
        <name>substrate</name>
    </ligand>
</feature>
<feature type="binding site" evidence="1">
    <location>
        <position position="389"/>
    </location>
    <ligand>
        <name>substrate</name>
    </ligand>
</feature>
<feature type="binding site" evidence="1">
    <location>
        <position position="443"/>
    </location>
    <ligand>
        <name>thiamine diphosphate</name>
        <dbReference type="ChEBI" id="CHEBI:58937"/>
    </ligand>
</feature>
<feature type="binding site" evidence="1">
    <location>
        <position position="467"/>
    </location>
    <ligand>
        <name>substrate</name>
    </ligand>
</feature>
<feature type="binding site" evidence="1">
    <location>
        <position position="475"/>
    </location>
    <ligand>
        <name>substrate</name>
    </ligand>
</feature>
<feature type="binding site" evidence="1">
    <location>
        <position position="528"/>
    </location>
    <ligand>
        <name>substrate</name>
    </ligand>
</feature>
<feature type="site" description="Important for catalytic activity" evidence="1">
    <location>
        <position position="31"/>
    </location>
</feature>
<feature type="site" description="Important for catalytic activity" evidence="1">
    <location>
        <position position="268"/>
    </location>
</feature>
<dbReference type="EC" id="2.2.1.1"/>
<dbReference type="EMBL" id="BA000019">
    <property type="protein sequence ID" value="BAB75043.1"/>
    <property type="molecule type" value="Genomic_DNA"/>
</dbReference>
<dbReference type="PIR" id="AI2223">
    <property type="entry name" value="AI2223"/>
</dbReference>
<dbReference type="RefSeq" id="WP_010997495.1">
    <property type="nucleotide sequence ID" value="NZ_RSCN01000038.1"/>
</dbReference>
<dbReference type="SMR" id="Q8YRU9"/>
<dbReference type="STRING" id="103690.gene:10495382"/>
<dbReference type="KEGG" id="ana:alr3344"/>
<dbReference type="eggNOG" id="COG0021">
    <property type="taxonomic scope" value="Bacteria"/>
</dbReference>
<dbReference type="OrthoDB" id="8732661at2"/>
<dbReference type="Proteomes" id="UP000002483">
    <property type="component" value="Chromosome"/>
</dbReference>
<dbReference type="GO" id="GO:0005829">
    <property type="term" value="C:cytosol"/>
    <property type="evidence" value="ECO:0007669"/>
    <property type="project" value="TreeGrafter"/>
</dbReference>
<dbReference type="GO" id="GO:0046872">
    <property type="term" value="F:metal ion binding"/>
    <property type="evidence" value="ECO:0007669"/>
    <property type="project" value="UniProtKB-KW"/>
</dbReference>
<dbReference type="GO" id="GO:0004802">
    <property type="term" value="F:transketolase activity"/>
    <property type="evidence" value="ECO:0007669"/>
    <property type="project" value="UniProtKB-EC"/>
</dbReference>
<dbReference type="GO" id="GO:0006098">
    <property type="term" value="P:pentose-phosphate shunt"/>
    <property type="evidence" value="ECO:0007669"/>
    <property type="project" value="TreeGrafter"/>
</dbReference>
<dbReference type="CDD" id="cd07033">
    <property type="entry name" value="TPP_PYR_DXS_TK_like"/>
    <property type="match status" value="1"/>
</dbReference>
<dbReference type="CDD" id="cd02012">
    <property type="entry name" value="TPP_TK"/>
    <property type="match status" value="1"/>
</dbReference>
<dbReference type="FunFam" id="3.40.50.920:FF:000003">
    <property type="entry name" value="Transketolase"/>
    <property type="match status" value="1"/>
</dbReference>
<dbReference type="FunFam" id="3.40.50.970:FF:000003">
    <property type="entry name" value="Transketolase"/>
    <property type="match status" value="1"/>
</dbReference>
<dbReference type="FunFam" id="3.40.50.970:FF:000004">
    <property type="entry name" value="Transketolase"/>
    <property type="match status" value="1"/>
</dbReference>
<dbReference type="Gene3D" id="3.40.50.920">
    <property type="match status" value="1"/>
</dbReference>
<dbReference type="Gene3D" id="3.40.50.970">
    <property type="match status" value="2"/>
</dbReference>
<dbReference type="InterPro" id="IPR029061">
    <property type="entry name" value="THDP-binding"/>
</dbReference>
<dbReference type="InterPro" id="IPR009014">
    <property type="entry name" value="Transketo_C/PFOR_II"/>
</dbReference>
<dbReference type="InterPro" id="IPR055152">
    <property type="entry name" value="Transketolase-like_C_2"/>
</dbReference>
<dbReference type="InterPro" id="IPR005475">
    <property type="entry name" value="Transketolase-like_Pyr-bd"/>
</dbReference>
<dbReference type="InterPro" id="IPR005478">
    <property type="entry name" value="Transketolase_bac-like"/>
</dbReference>
<dbReference type="InterPro" id="IPR020826">
    <property type="entry name" value="Transketolase_BS"/>
</dbReference>
<dbReference type="InterPro" id="IPR049557">
    <property type="entry name" value="Transketolase_CS"/>
</dbReference>
<dbReference type="InterPro" id="IPR033247">
    <property type="entry name" value="Transketolase_fam"/>
</dbReference>
<dbReference type="InterPro" id="IPR005474">
    <property type="entry name" value="Transketolase_N"/>
</dbReference>
<dbReference type="NCBIfam" id="TIGR00232">
    <property type="entry name" value="tktlase_bact"/>
    <property type="match status" value="1"/>
</dbReference>
<dbReference type="PANTHER" id="PTHR43522">
    <property type="entry name" value="TRANSKETOLASE"/>
    <property type="match status" value="1"/>
</dbReference>
<dbReference type="PANTHER" id="PTHR43522:SF2">
    <property type="entry name" value="TRANSKETOLASE 1-RELATED"/>
    <property type="match status" value="1"/>
</dbReference>
<dbReference type="Pfam" id="PF02779">
    <property type="entry name" value="Transket_pyr"/>
    <property type="match status" value="1"/>
</dbReference>
<dbReference type="Pfam" id="PF22613">
    <property type="entry name" value="Transketolase_C_1"/>
    <property type="match status" value="1"/>
</dbReference>
<dbReference type="Pfam" id="PF00456">
    <property type="entry name" value="Transketolase_N"/>
    <property type="match status" value="1"/>
</dbReference>
<dbReference type="SMART" id="SM00861">
    <property type="entry name" value="Transket_pyr"/>
    <property type="match status" value="1"/>
</dbReference>
<dbReference type="SUPFAM" id="SSF52518">
    <property type="entry name" value="Thiamin diphosphate-binding fold (THDP-binding)"/>
    <property type="match status" value="2"/>
</dbReference>
<dbReference type="SUPFAM" id="SSF52922">
    <property type="entry name" value="TK C-terminal domain-like"/>
    <property type="match status" value="1"/>
</dbReference>
<dbReference type="PROSITE" id="PS00801">
    <property type="entry name" value="TRANSKETOLASE_1"/>
    <property type="match status" value="1"/>
</dbReference>
<dbReference type="PROSITE" id="PS00802">
    <property type="entry name" value="TRANSKETOLASE_2"/>
    <property type="match status" value="1"/>
</dbReference>
<proteinExistence type="evidence at protein level"/>
<accession>Q8YRU9</accession>
<keyword id="KW-0106">Calcium</keyword>
<keyword id="KW-0903">Direct protein sequencing</keyword>
<keyword id="KW-0460">Magnesium</keyword>
<keyword id="KW-0479">Metal-binding</keyword>
<keyword id="KW-1185">Reference proteome</keyword>
<keyword id="KW-0786">Thiamine pyrophosphate</keyword>
<keyword id="KW-0808">Transferase</keyword>
<comment type="function">
    <text evidence="1">Catalyzes the transfer of a two-carbon ketol group from a ketose donor to an aldose acceptor, via a covalent intermediate with the cofactor thiamine pyrophosphate.</text>
</comment>
<comment type="catalytic activity">
    <reaction evidence="2">
        <text>D-sedoheptulose 7-phosphate + D-glyceraldehyde 3-phosphate = aldehydo-D-ribose 5-phosphate + D-xylulose 5-phosphate</text>
        <dbReference type="Rhea" id="RHEA:10508"/>
        <dbReference type="ChEBI" id="CHEBI:57483"/>
        <dbReference type="ChEBI" id="CHEBI:57737"/>
        <dbReference type="ChEBI" id="CHEBI:58273"/>
        <dbReference type="ChEBI" id="CHEBI:59776"/>
        <dbReference type="EC" id="2.2.1.1"/>
    </reaction>
</comment>
<comment type="cofactor">
    <cofactor evidence="1">
        <name>Mg(2+)</name>
        <dbReference type="ChEBI" id="CHEBI:18420"/>
    </cofactor>
    <cofactor evidence="1">
        <name>Ca(2+)</name>
        <dbReference type="ChEBI" id="CHEBI:29108"/>
    </cofactor>
    <cofactor evidence="1">
        <name>Mn(2+)</name>
        <dbReference type="ChEBI" id="CHEBI:29035"/>
    </cofactor>
    <cofactor evidence="1">
        <name>Co(2+)</name>
        <dbReference type="ChEBI" id="CHEBI:48828"/>
    </cofactor>
    <text evidence="1">Binds 1 Mg(2+) ion per subunit. Can also utilize other divalent metal cations, such as Ca(2+), Mn(2+) and Co(2+).</text>
</comment>
<comment type="cofactor">
    <cofactor evidence="2">
        <name>thiamine diphosphate</name>
        <dbReference type="ChEBI" id="CHEBI:58937"/>
    </cofactor>
    <text evidence="2">Binds 1 thiamine pyrophosphate per subunit.</text>
</comment>
<comment type="subunit">
    <text evidence="1">Homodimer.</text>
</comment>
<comment type="mass spectrometry"/>
<comment type="similarity">
    <text evidence="3">Belongs to the transketolase family.</text>
</comment>
<reference evidence="6" key="1">
    <citation type="journal article" date="2001" name="DNA Res.">
        <title>Complete genomic sequence of the filamentous nitrogen-fixing cyanobacterium Anabaena sp. strain PCC 7120.</title>
        <authorList>
            <person name="Kaneko T."/>
            <person name="Nakamura Y."/>
            <person name="Wolk C.P."/>
            <person name="Kuritz T."/>
            <person name="Sasamoto S."/>
            <person name="Watanabe A."/>
            <person name="Iriguchi M."/>
            <person name="Ishikawa A."/>
            <person name="Kawashima K."/>
            <person name="Kimura T."/>
            <person name="Kishida Y."/>
            <person name="Kohara M."/>
            <person name="Matsumoto M."/>
            <person name="Matsuno A."/>
            <person name="Muraki A."/>
            <person name="Nakazaki N."/>
            <person name="Shimpo S."/>
            <person name="Sugimoto M."/>
            <person name="Takazawa M."/>
            <person name="Yamada M."/>
            <person name="Yasuda M."/>
            <person name="Tabata S."/>
        </authorList>
    </citation>
    <scope>NUCLEOTIDE SEQUENCE [LARGE SCALE GENOMIC DNA]</scope>
    <source>
        <strain>PCC 7120 / SAG 25.82 / UTEX 2576</strain>
    </source>
</reference>
<reference evidence="5" key="2">
    <citation type="submission" date="2008-12" db="UniProtKB">
        <authorList>
            <person name="Singh H."/>
            <person name="Rajaram H."/>
            <person name="Apte S.K."/>
        </authorList>
    </citation>
    <scope>PROTEIN SEQUENCE OF 2-20; 261-280 AND 491-510</scope>
    <scope>MASS SPECTROMETRY</scope>
</reference>
<evidence type="ECO:0000250" key="1"/>
<evidence type="ECO:0000250" key="2">
    <source>
        <dbReference type="UniProtKB" id="P23254"/>
    </source>
</evidence>
<evidence type="ECO:0000255" key="3"/>
<evidence type="ECO:0000269" key="4">
    <source ref="2"/>
</evidence>
<evidence type="ECO:0000305" key="5"/>
<evidence type="ECO:0000312" key="6">
    <source>
        <dbReference type="EMBL" id="BAB75043.1"/>
    </source>
</evidence>
<protein>
    <recommendedName>
        <fullName evidence="2 6">Transketolase</fullName>
        <shortName evidence="2">TK</shortName>
        <ecNumber>2.2.1.1</ecNumber>
    </recommendedName>
</protein>
<name>TKT_NOSS1</name>
<organism>
    <name type="scientific">Nostoc sp. (strain PCC 7120 / SAG 25.82 / UTEX 2576)</name>
    <dbReference type="NCBI Taxonomy" id="103690"/>
    <lineage>
        <taxon>Bacteria</taxon>
        <taxon>Bacillati</taxon>
        <taxon>Cyanobacteriota</taxon>
        <taxon>Cyanophyceae</taxon>
        <taxon>Nostocales</taxon>
        <taxon>Nostocaceae</taxon>
        <taxon>Nostoc</taxon>
    </lineage>
</organism>
<gene>
    <name type="primary">tkt</name>
    <name type="ordered locus">alr3344</name>
</gene>
<sequence>MAVATQSLEELSINAIRFLAVDAIEKAKSGHPGLPMGAAPMAFVLWNRFMRYNPKNPKWFNRDRFVLSAGHGSMLQYALLYLTGYDSVSIEDIKQFRQWESKTPGHPENFMTAGVEVTTGPLGQGIANGVGLAIAEAHLAAKFNKPDAKIVDHYTYVILGDGCNMEGVSGEAASFAGHLGLGKLIALYDDNHISIDGSTDVAFTEDVSKRFESYGWHVIHVKDGNTDLEAIHKAIEEAKAVTDKPTMIKVTTIIGYGSPNKSNTAGVHGAALGGDEVALTRQNLGWSHDPFVVPEDVLNYTRKAVERGAGYESDWNKTYADYKAKYPQEAAEFERYLSGKLADGWDKVLPSYTPEDKGLPTRKHSETCLNKLAAVLPELIGGSADLTHSNLTEIKGKGDFQKGQYQNPNIHFGVREHGMGAICNGIALHGSGLIPYGATFLIFSDYMRAPIRLSALSQAGSIWVMTHDSIGQGEDGPTHQPIETLASLRAIPNLTVIRPADGNETSGAYKVAIERAKNNAPTLLAFTRQNVPNLAGTSIDDVAKGGYIVVDTDGTPDLILIGTGSELSLCVTAAEKLKAEGKKVRVVSLAAWDLFDAQDAAYKESVLPKAVTKRLAVEAASSFGWHKYIGSEGDAVTIDRFGASAPGGVCLEKFGFSVDNVLAKAKQLLG</sequence>